<protein>
    <recommendedName>
        <fullName evidence="1">DNA-directed RNA polymerase subunit epsilon</fullName>
        <shortName evidence="1">RNAP epsilon subunit</shortName>
        <ecNumber evidence="1">2.7.7.6</ecNumber>
    </recommendedName>
    <alternativeName>
        <fullName evidence="1">RNA polymerase epsilon subunit</fullName>
    </alternativeName>
    <alternativeName>
        <fullName evidence="1">Transcriptase subunit epsilon</fullName>
    </alternativeName>
</protein>
<name>RPOY_STRP1</name>
<gene>
    <name evidence="1" type="primary">rpoY</name>
    <name type="ordered locus">SPy_1875</name>
    <name type="ordered locus">M5005_Spy1594</name>
</gene>
<accession>Q99Y43</accession>
<accession>Q48WR3</accession>
<comment type="function">
    <text evidence="1">A non-essential component of RNA polymerase (RNAP).</text>
</comment>
<comment type="catalytic activity">
    <reaction evidence="1">
        <text>RNA(n) + a ribonucleoside 5'-triphosphate = RNA(n+1) + diphosphate</text>
        <dbReference type="Rhea" id="RHEA:21248"/>
        <dbReference type="Rhea" id="RHEA-COMP:14527"/>
        <dbReference type="Rhea" id="RHEA-COMP:17342"/>
        <dbReference type="ChEBI" id="CHEBI:33019"/>
        <dbReference type="ChEBI" id="CHEBI:61557"/>
        <dbReference type="ChEBI" id="CHEBI:140395"/>
        <dbReference type="EC" id="2.7.7.6"/>
    </reaction>
</comment>
<comment type="subunit">
    <text evidence="1">RNAP is composed of a core of 2 alpha, a beta and a beta' subunit. The core is associated with a delta subunit, and at least one of epsilon or omega. When a sigma factor is associated with the core the holoenzyme is formed, which can initiate transcription.</text>
</comment>
<comment type="similarity">
    <text evidence="1">Belongs to the RNA polymerase subunit epsilon family.</text>
</comment>
<organism>
    <name type="scientific">Streptococcus pyogenes serotype M1</name>
    <dbReference type="NCBI Taxonomy" id="301447"/>
    <lineage>
        <taxon>Bacteria</taxon>
        <taxon>Bacillati</taxon>
        <taxon>Bacillota</taxon>
        <taxon>Bacilli</taxon>
        <taxon>Lactobacillales</taxon>
        <taxon>Streptococcaceae</taxon>
        <taxon>Streptococcus</taxon>
    </lineage>
</organism>
<dbReference type="EC" id="2.7.7.6" evidence="1"/>
<dbReference type="EMBL" id="AE004092">
    <property type="protein sequence ID" value="AAK34589.1"/>
    <property type="molecule type" value="Genomic_DNA"/>
</dbReference>
<dbReference type="EMBL" id="CP000017">
    <property type="protein sequence ID" value="AAZ52212.1"/>
    <property type="molecule type" value="Genomic_DNA"/>
</dbReference>
<dbReference type="RefSeq" id="NP_269868.1">
    <property type="nucleotide sequence ID" value="NC_002737.2"/>
</dbReference>
<dbReference type="SMR" id="Q99Y43"/>
<dbReference type="PaxDb" id="1314-HKU360_01714"/>
<dbReference type="KEGG" id="spy:SPy_1875"/>
<dbReference type="KEGG" id="spz:M5005_Spy1594"/>
<dbReference type="PATRIC" id="fig|160490.10.peg.1628"/>
<dbReference type="HOGENOM" id="CLU_187518_0_0_9"/>
<dbReference type="OMA" id="MIFKVYF"/>
<dbReference type="Proteomes" id="UP000000750">
    <property type="component" value="Chromosome"/>
</dbReference>
<dbReference type="GO" id="GO:0000428">
    <property type="term" value="C:DNA-directed RNA polymerase complex"/>
    <property type="evidence" value="ECO:0007669"/>
    <property type="project" value="UniProtKB-KW"/>
</dbReference>
<dbReference type="GO" id="GO:0003677">
    <property type="term" value="F:DNA binding"/>
    <property type="evidence" value="ECO:0007669"/>
    <property type="project" value="UniProtKB-UniRule"/>
</dbReference>
<dbReference type="GO" id="GO:0003899">
    <property type="term" value="F:DNA-directed RNA polymerase activity"/>
    <property type="evidence" value="ECO:0007669"/>
    <property type="project" value="UniProtKB-UniRule"/>
</dbReference>
<dbReference type="GO" id="GO:0006351">
    <property type="term" value="P:DNA-templated transcription"/>
    <property type="evidence" value="ECO:0007669"/>
    <property type="project" value="UniProtKB-UniRule"/>
</dbReference>
<dbReference type="Gene3D" id="3.10.20.730">
    <property type="entry name" value="RNAP, epsilon subunit-like"/>
    <property type="match status" value="1"/>
</dbReference>
<dbReference type="HAMAP" id="MF_01553">
    <property type="entry name" value="RNApol_bact_RpoY"/>
    <property type="match status" value="1"/>
</dbReference>
<dbReference type="InterPro" id="IPR009907">
    <property type="entry name" value="RpoY"/>
</dbReference>
<dbReference type="NCBIfam" id="NF010188">
    <property type="entry name" value="PRK13667.1"/>
    <property type="match status" value="1"/>
</dbReference>
<dbReference type="Pfam" id="PF07288">
    <property type="entry name" value="RpoY"/>
    <property type="match status" value="1"/>
</dbReference>
<evidence type="ECO:0000255" key="1">
    <source>
        <dbReference type="HAMAP-Rule" id="MF_01553"/>
    </source>
</evidence>
<reference key="1">
    <citation type="journal article" date="2001" name="Proc. Natl. Acad. Sci. U.S.A.">
        <title>Complete genome sequence of an M1 strain of Streptococcus pyogenes.</title>
        <authorList>
            <person name="Ferretti J.J."/>
            <person name="McShan W.M."/>
            <person name="Ajdic D.J."/>
            <person name="Savic D.J."/>
            <person name="Savic G."/>
            <person name="Lyon K."/>
            <person name="Primeaux C."/>
            <person name="Sezate S."/>
            <person name="Suvorov A.N."/>
            <person name="Kenton S."/>
            <person name="Lai H.S."/>
            <person name="Lin S.P."/>
            <person name="Qian Y."/>
            <person name="Jia H.G."/>
            <person name="Najar F.Z."/>
            <person name="Ren Q."/>
            <person name="Zhu H."/>
            <person name="Song L."/>
            <person name="White J."/>
            <person name="Yuan X."/>
            <person name="Clifton S.W."/>
            <person name="Roe B.A."/>
            <person name="McLaughlin R.E."/>
        </authorList>
    </citation>
    <scope>NUCLEOTIDE SEQUENCE [LARGE SCALE GENOMIC DNA]</scope>
    <source>
        <strain>ATCC 700294 / SF370 / Serotype M1</strain>
    </source>
</reference>
<reference key="2">
    <citation type="journal article" date="2005" name="J. Infect. Dis.">
        <title>Evolutionary origin and emergence of a highly successful clone of serotype M1 group A Streptococcus involved multiple horizontal gene transfer events.</title>
        <authorList>
            <person name="Sumby P."/>
            <person name="Porcella S.F."/>
            <person name="Madrigal A.G."/>
            <person name="Barbian K.D."/>
            <person name="Virtaneva K."/>
            <person name="Ricklefs S.M."/>
            <person name="Sturdevant D.E."/>
            <person name="Graham M.R."/>
            <person name="Vuopio-Varkila J."/>
            <person name="Hoe N.P."/>
            <person name="Musser J.M."/>
        </authorList>
    </citation>
    <scope>NUCLEOTIDE SEQUENCE [LARGE SCALE GENOMIC DNA]</scope>
    <source>
        <strain>ATCC BAA-947 / MGAS5005 / Serotype M1</strain>
    </source>
</reference>
<proteinExistence type="inferred from homology"/>
<keyword id="KW-0240">DNA-directed RNA polymerase</keyword>
<keyword id="KW-0548">Nucleotidyltransferase</keyword>
<keyword id="KW-1185">Reference proteome</keyword>
<keyword id="KW-0804">Transcription</keyword>
<keyword id="KW-0808">Transferase</keyword>
<sequence length="76" mass="9146">MIYKVFYQETKDQSPRRESTKALYLNIDATDELDGRIKARRLVEDNTYYNVEFIELLSDKHLDYEKETGVFELTEF</sequence>
<feature type="chain" id="PRO_0000163149" description="DNA-directed RNA polymerase subunit epsilon">
    <location>
        <begin position="1"/>
        <end position="76"/>
    </location>
</feature>